<gene>
    <name type="primary">II</name>
</gene>
<feature type="chain" id="PRO_0000098210" description="Replication-associated protein G2P">
    <location>
        <begin position="1"/>
        <end position="278"/>
    </location>
</feature>
<feature type="splice variant" id="VSP_037574" description="In isoform G10P." evidence="2">
    <location>
        <begin position="1"/>
        <end position="205"/>
    </location>
</feature>
<feature type="sequence variant" description="In strain: New York.">
    <original>Y</original>
    <variation>H</variation>
    <location>
        <position position="77"/>
    </location>
</feature>
<proteinExistence type="inferred from homology"/>
<organismHost>
    <name type="scientific">Pseudomonas aeruginosa</name>
    <dbReference type="NCBI Taxonomy" id="287"/>
</organismHost>
<dbReference type="EC" id="3.1.21.-"/>
<dbReference type="EC" id="6.5.1.1"/>
<dbReference type="EMBL" id="M11912">
    <property type="protein sequence ID" value="AAA88383.1"/>
    <property type="molecule type" value="Genomic_DNA"/>
</dbReference>
<dbReference type="EMBL" id="M19377">
    <property type="protein sequence ID" value="AAA88392.1"/>
    <property type="molecule type" value="Genomic_DNA"/>
</dbReference>
<dbReference type="PIR" id="A04235">
    <property type="entry name" value="Z2BP73"/>
</dbReference>
<dbReference type="RefSeq" id="NP_040657.1">
    <molecule id="P03627-1"/>
    <property type="nucleotide sequence ID" value="NC_001418.1"/>
</dbReference>
<dbReference type="KEGG" id="vg:1260909"/>
<dbReference type="Proteomes" id="UP000001719">
    <property type="component" value="Genome"/>
</dbReference>
<dbReference type="Proteomes" id="UP000009090">
    <property type="component" value="Genome"/>
</dbReference>
<dbReference type="GO" id="GO:0003677">
    <property type="term" value="F:DNA binding"/>
    <property type="evidence" value="ECO:0007669"/>
    <property type="project" value="UniProtKB-KW"/>
</dbReference>
<dbReference type="GO" id="GO:0003910">
    <property type="term" value="F:DNA ligase (ATP) activity"/>
    <property type="evidence" value="ECO:0007669"/>
    <property type="project" value="UniProtKB-EC"/>
</dbReference>
<dbReference type="GO" id="GO:0004519">
    <property type="term" value="F:endonuclease activity"/>
    <property type="evidence" value="ECO:0007669"/>
    <property type="project" value="UniProtKB-KW"/>
</dbReference>
<dbReference type="GO" id="GO:0006260">
    <property type="term" value="P:DNA replication"/>
    <property type="evidence" value="ECO:0007669"/>
    <property type="project" value="UniProtKB-KW"/>
</dbReference>
<dbReference type="InterPro" id="IPR056906">
    <property type="entry name" value="ORF2/G2P_dom"/>
</dbReference>
<dbReference type="Pfam" id="PF23343">
    <property type="entry name" value="REP_ORF2-G2P"/>
    <property type="match status" value="1"/>
</dbReference>
<keyword id="KW-0024">Alternative initiation</keyword>
<keyword id="KW-0235">DNA replication</keyword>
<keyword id="KW-0238">DNA-binding</keyword>
<keyword id="KW-0255">Endonuclease</keyword>
<keyword id="KW-0378">Hydrolase</keyword>
<keyword id="KW-0436">Ligase</keyword>
<keyword id="KW-0540">Nuclease</keyword>
<keyword id="KW-1185">Reference proteome</keyword>
<reference key="1">
    <citation type="journal article" date="1985" name="J. Virol.">
        <title>Nucleotide sequence of the genome of Pf3, an IncP-1 plasmid-specific filamentous bacteriophage of Pseudomonas aeruginosa.</title>
        <authorList>
            <person name="Luiten R.G.M."/>
            <person name="Putterman D.G."/>
            <person name="Schoenmakers J.G.G."/>
            <person name="Konings R.N.H."/>
            <person name="Day L.A."/>
        </authorList>
    </citation>
    <scope>NUCLEOTIDE SEQUENCE [GENOMIC DNA]</scope>
    <source>
        <strain>New York</strain>
        <strain>Nijmegen</strain>
    </source>
</reference>
<accession>P03627</accession>
<sequence>MRCLKSFRHGFTLGTNCYEPGAKRPRGDRSTVGGWSHGSTSRNIAFLRSIDEAKLTGHALALTLTVRDCPDTSDDWYKVRRAFEMRLRRLGLIRMHWVIEWQRRGVPHLHCAAFFDDTAPALLPAVIMRSWCDLVSDYNASPLSQYVLPITDAIGWFQYVSKHAARGVNHYQRSPENIPPQWQKKTGRMWGKVGEWPVVEKAEIFMGDATFYQLRRIVKRWRFADARASGSIHRIRSAKKYLQVPETLSRVLGASEWMPENELLSILYFLKSQGYEFL</sequence>
<protein>
    <recommendedName>
        <fullName>Replication-associated protein G2P</fullName>
        <shortName>Rep</shortName>
        <ecNumber>3.1.21.-</ecNumber>
        <ecNumber>6.5.1.1</ecNumber>
    </recommendedName>
    <alternativeName>
        <fullName>G2P</fullName>
    </alternativeName>
    <alternativeName>
        <fullName>Gene 2 protein</fullName>
    </alternativeName>
</protein>
<comment type="function">
    <text evidence="1">Isoform G2P plays an essential role in viral DNA replication. Binds the origin of replication and cleaves the dsDNA replicative form I (RFI) and becomes covalently bound to it via phosphotyrosine bond, generating the dsDNA replicative form II (RFII). In turn, viral DNA replication initiates at the 3'-OH of the cleavage site. After one round of rolling circle synthesis, protein G2P is linked to the newly synthesized ssDNA and joins the ends of the displaced strand to generate a circular single-stranded molecule ready to be packed into a virion.</text>
</comment>
<comment type="function">
    <text evidence="1">Isoform G10P protein binds to double-stranded DNA and prevents hydrolysis by nucleases. Additionally, G10P is an inhibitor of DNA replication and may have a role in the transition from semiconservative replicative form DNA replication to single-stranded DNA synthesis in the life cycle.</text>
</comment>
<comment type="catalytic activity">
    <reaction>
        <text>ATP + (deoxyribonucleotide)n-3'-hydroxyl + 5'-phospho-(deoxyribonucleotide)m = (deoxyribonucleotide)n+m + AMP + diphosphate.</text>
        <dbReference type="EC" id="6.5.1.1"/>
    </reaction>
</comment>
<comment type="alternative products">
    <event type="alternative initiation"/>
    <isoform>
        <id>P03627-1</id>
        <name>G2P</name>
        <name>Gene 2 protein</name>
        <sequence type="displayed"/>
    </isoform>
    <isoform>
        <id>P03627-2</id>
        <name>G10P</name>
        <name>Gene 10 protein</name>
        <sequence type="described" ref="VSP_037574"/>
    </isoform>
</comment>
<comment type="similarity">
    <text evidence="2">Belongs to the inovirus G2P protein family.</text>
</comment>
<evidence type="ECO:0000250" key="1"/>
<evidence type="ECO:0000305" key="2"/>
<organism>
    <name type="scientific">Pseudomonas phage Pf3</name>
    <name type="common">Bacteriophage Pf3</name>
    <dbReference type="NCBI Taxonomy" id="10872"/>
    <lineage>
        <taxon>Viruses</taxon>
        <taxon>Monodnaviria</taxon>
        <taxon>Loebvirae</taxon>
        <taxon>Hofneiviricota</taxon>
        <taxon>Faserviricetes</taxon>
        <taxon>Tubulavirales</taxon>
        <taxon>Inoviridae</taxon>
        <taxon>Tertilicivirus</taxon>
        <taxon>Tertilicivirus Pf3</taxon>
    </lineage>
</organism>
<name>REP_BPPF3</name>